<evidence type="ECO:0000250" key="1"/>
<evidence type="ECO:0000255" key="2"/>
<evidence type="ECO:0000255" key="3">
    <source>
        <dbReference type="PROSITE-ProRule" id="PRU00336"/>
    </source>
</evidence>
<evidence type="ECO:0000256" key="4">
    <source>
        <dbReference type="SAM" id="MobiDB-lite"/>
    </source>
</evidence>
<evidence type="ECO:0000305" key="5"/>
<sequence>MLSLFRCAVTRAPHIASKGISVQISRNLANSLIVQNKRRLNTKSYFLQEQKKDDKKAQSILTDDLLFKAGIDVEEGKKEGQQKQHETEEGNEEQQSENSSNKKRKRRMTSADKKKERYANYFYIFTFSSLAGLGLYMCRDWEENEDDEMKKDIDNGYTPDLMYKRFRARFNSVFTYFQEPPFPDLLPPPPPAPYQRPLTLVITLEDFLVHSEWDQKHGWRTAKRPGADYFLGYLSQYYEIVLFSSNYMMYAEKIAEKMDPIHAFISYNLFKEHCVYKDGVHIKDLSKLNRDLKKVMIIDTDENSYKLQPENAIPMDPWDGKADDKLLRLIPFLEYMATQQVEDVRPILKSYHNKRELPAEFEQRVQKLKNKFEQDQKKKNDSNWLLKLLGLAPVINGIGGGNKFPLDMIREEGEKNYVRFMKLIEEEKEKMRIQQEQMSGQTFTLKDYVEGNIPTPEEQMKMQLEKQKEIDALFEQKKKEQQANK</sequence>
<dbReference type="EMBL" id="CR380954">
    <property type="protein sequence ID" value="CAG59953.1"/>
    <property type="molecule type" value="Genomic_DNA"/>
</dbReference>
<dbReference type="RefSeq" id="XP_447020.1">
    <property type="nucleotide sequence ID" value="XM_447020.1"/>
</dbReference>
<dbReference type="SMR" id="Q6FRX4"/>
<dbReference type="FunCoup" id="Q6FRX4">
    <property type="interactions" value="508"/>
</dbReference>
<dbReference type="STRING" id="284593.Q6FRX4"/>
<dbReference type="EnsemblFungi" id="CAGL0H05159g-T">
    <property type="protein sequence ID" value="CAGL0H05159g-T-p1"/>
    <property type="gene ID" value="CAGL0H05159g"/>
</dbReference>
<dbReference type="KEGG" id="cgr:2888680"/>
<dbReference type="CGD" id="CAL0130595">
    <property type="gene designation" value="CAGL0H05159g"/>
</dbReference>
<dbReference type="VEuPathDB" id="FungiDB:CAGL0H05159g"/>
<dbReference type="eggNOG" id="KOG2832">
    <property type="taxonomic scope" value="Eukaryota"/>
</dbReference>
<dbReference type="HOGENOM" id="CLU_023309_1_2_1"/>
<dbReference type="InParanoid" id="Q6FRX4"/>
<dbReference type="OMA" id="NLRQPYT"/>
<dbReference type="Proteomes" id="UP000002428">
    <property type="component" value="Chromosome H"/>
</dbReference>
<dbReference type="GO" id="GO:0005744">
    <property type="term" value="C:TIM23 mitochondrial import inner membrane translocase complex"/>
    <property type="evidence" value="ECO:0007669"/>
    <property type="project" value="EnsemblFungi"/>
</dbReference>
<dbReference type="GO" id="GO:0042802">
    <property type="term" value="F:identical protein binding"/>
    <property type="evidence" value="ECO:0007669"/>
    <property type="project" value="EnsemblFungi"/>
</dbReference>
<dbReference type="GO" id="GO:0030943">
    <property type="term" value="F:mitochondrion targeting sequence binding"/>
    <property type="evidence" value="ECO:0007669"/>
    <property type="project" value="EnsemblFungi"/>
</dbReference>
<dbReference type="GO" id="GO:0008320">
    <property type="term" value="F:protein transmembrane transporter activity"/>
    <property type="evidence" value="ECO:0007669"/>
    <property type="project" value="EnsemblFungi"/>
</dbReference>
<dbReference type="GO" id="GO:0030150">
    <property type="term" value="P:protein import into mitochondrial matrix"/>
    <property type="evidence" value="ECO:0007669"/>
    <property type="project" value="EnsemblFungi"/>
</dbReference>
<dbReference type="GO" id="GO:0046902">
    <property type="term" value="P:regulation of mitochondrial membrane permeability"/>
    <property type="evidence" value="ECO:0007669"/>
    <property type="project" value="EnsemblFungi"/>
</dbReference>
<dbReference type="CDD" id="cd07521">
    <property type="entry name" value="HAD_FCP1-like"/>
    <property type="match status" value="1"/>
</dbReference>
<dbReference type="FunFam" id="3.40.50.1000:FF:000019">
    <property type="entry name" value="Mitochondrial import inner membrane translocase subunit TIM50"/>
    <property type="match status" value="1"/>
</dbReference>
<dbReference type="Gene3D" id="3.40.50.1000">
    <property type="entry name" value="HAD superfamily/HAD-like"/>
    <property type="match status" value="1"/>
</dbReference>
<dbReference type="InterPro" id="IPR004274">
    <property type="entry name" value="FCP1_dom"/>
</dbReference>
<dbReference type="InterPro" id="IPR036412">
    <property type="entry name" value="HAD-like_sf"/>
</dbReference>
<dbReference type="InterPro" id="IPR023214">
    <property type="entry name" value="HAD_sf"/>
</dbReference>
<dbReference type="InterPro" id="IPR050365">
    <property type="entry name" value="TIM50"/>
</dbReference>
<dbReference type="PANTHER" id="PTHR12210">
    <property type="entry name" value="DULLARD PROTEIN PHOSPHATASE"/>
    <property type="match status" value="1"/>
</dbReference>
<dbReference type="Pfam" id="PF03031">
    <property type="entry name" value="NIF"/>
    <property type="match status" value="1"/>
</dbReference>
<dbReference type="SMART" id="SM00577">
    <property type="entry name" value="CPDc"/>
    <property type="match status" value="1"/>
</dbReference>
<dbReference type="SUPFAM" id="SSF56784">
    <property type="entry name" value="HAD-like"/>
    <property type="match status" value="1"/>
</dbReference>
<dbReference type="PROSITE" id="PS50969">
    <property type="entry name" value="FCP1"/>
    <property type="match status" value="1"/>
</dbReference>
<keyword id="KW-0472">Membrane</keyword>
<keyword id="KW-0496">Mitochondrion</keyword>
<keyword id="KW-0999">Mitochondrion inner membrane</keyword>
<keyword id="KW-0653">Protein transport</keyword>
<keyword id="KW-1185">Reference proteome</keyword>
<keyword id="KW-0809">Transit peptide</keyword>
<keyword id="KW-0811">Translocation</keyword>
<keyword id="KW-0812">Transmembrane</keyword>
<keyword id="KW-1133">Transmembrane helix</keyword>
<keyword id="KW-0813">Transport</keyword>
<organism>
    <name type="scientific">Candida glabrata (strain ATCC 2001 / BCRC 20586 / JCM 3761 / NBRC 0622 / NRRL Y-65 / CBS 138)</name>
    <name type="common">Yeast</name>
    <name type="synonym">Nakaseomyces glabratus</name>
    <dbReference type="NCBI Taxonomy" id="284593"/>
    <lineage>
        <taxon>Eukaryota</taxon>
        <taxon>Fungi</taxon>
        <taxon>Dikarya</taxon>
        <taxon>Ascomycota</taxon>
        <taxon>Saccharomycotina</taxon>
        <taxon>Saccharomycetes</taxon>
        <taxon>Saccharomycetales</taxon>
        <taxon>Saccharomycetaceae</taxon>
        <taxon>Nakaseomyces</taxon>
    </lineage>
</organism>
<feature type="transit peptide" description="Mitochondrion" evidence="2">
    <location>
        <begin position="1"/>
        <end position="35"/>
    </location>
</feature>
<feature type="chain" id="PRO_0000043128" description="Mitochondrial import inner membrane translocase subunit TIM50">
    <location>
        <begin position="36"/>
        <end position="485"/>
    </location>
</feature>
<feature type="topological domain" description="Mitochondrial matrix" evidence="2">
    <location>
        <begin position="36"/>
        <end position="120"/>
    </location>
</feature>
<feature type="transmembrane region" description="Helical" evidence="2">
    <location>
        <begin position="121"/>
        <end position="137"/>
    </location>
</feature>
<feature type="topological domain" description="Mitochondrial intermembrane" evidence="2">
    <location>
        <begin position="138"/>
        <end position="485"/>
    </location>
</feature>
<feature type="domain" description="FCP1 homology" evidence="3">
    <location>
        <begin position="193"/>
        <end position="336"/>
    </location>
</feature>
<feature type="region of interest" description="Disordered" evidence="4">
    <location>
        <begin position="76"/>
        <end position="111"/>
    </location>
</feature>
<feature type="compositionally biased region" description="Basic and acidic residues" evidence="4">
    <location>
        <begin position="76"/>
        <end position="88"/>
    </location>
</feature>
<name>TIM50_CANGA</name>
<comment type="function">
    <text evidence="1">Essential component of the TIM23 complex, a complex that mediates the translocation of transit peptide-containing proteins across the mitochondrial inner membrane. Required to direct preproteins in transit and direct them to the channel protein TIM23, and possibly facilitates transfer of the translocating proteins from the TOM complex to the TIM23 complex (By similarity).</text>
</comment>
<comment type="subunit">
    <text evidence="1">Component of the TIM23 complex, at least composed of TIM23, TIM17, TIM50 and TIM21. Interacts with preproteins in transit (By similarity).</text>
</comment>
<comment type="subcellular location">
    <subcellularLocation>
        <location evidence="1">Mitochondrion inner membrane</location>
        <topology evidence="1">Single-pass membrane protein</topology>
    </subcellularLocation>
</comment>
<comment type="similarity">
    <text evidence="5">Belongs to the TIM50 family.</text>
</comment>
<proteinExistence type="inferred from homology"/>
<accession>Q6FRX4</accession>
<reference key="1">
    <citation type="journal article" date="2004" name="Nature">
        <title>Genome evolution in yeasts.</title>
        <authorList>
            <person name="Dujon B."/>
            <person name="Sherman D."/>
            <person name="Fischer G."/>
            <person name="Durrens P."/>
            <person name="Casaregola S."/>
            <person name="Lafontaine I."/>
            <person name="de Montigny J."/>
            <person name="Marck C."/>
            <person name="Neuveglise C."/>
            <person name="Talla E."/>
            <person name="Goffard N."/>
            <person name="Frangeul L."/>
            <person name="Aigle M."/>
            <person name="Anthouard V."/>
            <person name="Babour A."/>
            <person name="Barbe V."/>
            <person name="Barnay S."/>
            <person name="Blanchin S."/>
            <person name="Beckerich J.-M."/>
            <person name="Beyne E."/>
            <person name="Bleykasten C."/>
            <person name="Boisrame A."/>
            <person name="Boyer J."/>
            <person name="Cattolico L."/>
            <person name="Confanioleri F."/>
            <person name="de Daruvar A."/>
            <person name="Despons L."/>
            <person name="Fabre E."/>
            <person name="Fairhead C."/>
            <person name="Ferry-Dumazet H."/>
            <person name="Groppi A."/>
            <person name="Hantraye F."/>
            <person name="Hennequin C."/>
            <person name="Jauniaux N."/>
            <person name="Joyet P."/>
            <person name="Kachouri R."/>
            <person name="Kerrest A."/>
            <person name="Koszul R."/>
            <person name="Lemaire M."/>
            <person name="Lesur I."/>
            <person name="Ma L."/>
            <person name="Muller H."/>
            <person name="Nicaud J.-M."/>
            <person name="Nikolski M."/>
            <person name="Oztas S."/>
            <person name="Ozier-Kalogeropoulos O."/>
            <person name="Pellenz S."/>
            <person name="Potier S."/>
            <person name="Richard G.-F."/>
            <person name="Straub M.-L."/>
            <person name="Suleau A."/>
            <person name="Swennen D."/>
            <person name="Tekaia F."/>
            <person name="Wesolowski-Louvel M."/>
            <person name="Westhof E."/>
            <person name="Wirth B."/>
            <person name="Zeniou-Meyer M."/>
            <person name="Zivanovic Y."/>
            <person name="Bolotin-Fukuhara M."/>
            <person name="Thierry A."/>
            <person name="Bouchier C."/>
            <person name="Caudron B."/>
            <person name="Scarpelli C."/>
            <person name="Gaillardin C."/>
            <person name="Weissenbach J."/>
            <person name="Wincker P."/>
            <person name="Souciet J.-L."/>
        </authorList>
    </citation>
    <scope>NUCLEOTIDE SEQUENCE [LARGE SCALE GENOMIC DNA]</scope>
    <source>
        <strain>ATCC 2001 / BCRC 20586 / JCM 3761 / NBRC 0622 / NRRL Y-65 / CBS 138</strain>
    </source>
</reference>
<gene>
    <name type="primary">TIM50</name>
    <name type="ordered locus">CAGL0H05159g</name>
</gene>
<protein>
    <recommendedName>
        <fullName>Mitochondrial import inner membrane translocase subunit TIM50</fullName>
    </recommendedName>
</protein>